<keyword id="KW-0021">Allosteric enzyme</keyword>
<keyword id="KW-0067">ATP-binding</keyword>
<keyword id="KW-0963">Cytoplasm</keyword>
<keyword id="KW-0324">Glycolysis</keyword>
<keyword id="KW-0418">Kinase</keyword>
<keyword id="KW-0460">Magnesium</keyword>
<keyword id="KW-0479">Metal-binding</keyword>
<keyword id="KW-0547">Nucleotide-binding</keyword>
<keyword id="KW-0808">Transferase</keyword>
<feature type="chain" id="PRO_0000111979" description="ATP-dependent 6-phosphofructokinase">
    <location>
        <begin position="1"/>
        <end position="322"/>
    </location>
</feature>
<feature type="active site" description="Proton acceptor" evidence="1">
    <location>
        <position position="129"/>
    </location>
</feature>
<feature type="binding site" evidence="1">
    <location>
        <position position="11"/>
    </location>
    <ligand>
        <name>ATP</name>
        <dbReference type="ChEBI" id="CHEBI:30616"/>
    </ligand>
</feature>
<feature type="binding site" evidence="1">
    <location>
        <begin position="21"/>
        <end position="25"/>
    </location>
    <ligand>
        <name>ADP</name>
        <dbReference type="ChEBI" id="CHEBI:456216"/>
        <note>allosteric activator; ligand shared between dimeric partners</note>
    </ligand>
</feature>
<feature type="binding site" evidence="1">
    <location>
        <begin position="72"/>
        <end position="73"/>
    </location>
    <ligand>
        <name>ATP</name>
        <dbReference type="ChEBI" id="CHEBI:30616"/>
    </ligand>
</feature>
<feature type="binding site" evidence="1">
    <location>
        <begin position="102"/>
        <end position="105"/>
    </location>
    <ligand>
        <name>ATP</name>
        <dbReference type="ChEBI" id="CHEBI:30616"/>
    </ligand>
</feature>
<feature type="binding site" evidence="1">
    <location>
        <position position="103"/>
    </location>
    <ligand>
        <name>Mg(2+)</name>
        <dbReference type="ChEBI" id="CHEBI:18420"/>
        <note>catalytic</note>
    </ligand>
</feature>
<feature type="binding site" description="in other chain" evidence="1">
    <location>
        <begin position="127"/>
        <end position="129"/>
    </location>
    <ligand>
        <name>substrate</name>
        <note>ligand shared between dimeric partners</note>
    </ligand>
</feature>
<feature type="binding site" description="in other chain" evidence="1">
    <location>
        <position position="156"/>
    </location>
    <ligand>
        <name>ADP</name>
        <dbReference type="ChEBI" id="CHEBI:456216"/>
        <note>allosteric activator; ligand shared between dimeric partners</note>
    </ligand>
</feature>
<feature type="binding site" evidence="1">
    <location>
        <position position="164"/>
    </location>
    <ligand>
        <name>substrate</name>
        <note>ligand shared between dimeric partners</note>
    </ligand>
</feature>
<feature type="binding site" description="in other chain" evidence="1">
    <location>
        <begin position="171"/>
        <end position="173"/>
    </location>
    <ligand>
        <name>substrate</name>
        <note>ligand shared between dimeric partners</note>
    </ligand>
</feature>
<feature type="binding site" description="in other chain" evidence="1">
    <location>
        <begin position="187"/>
        <end position="189"/>
    </location>
    <ligand>
        <name>ADP</name>
        <dbReference type="ChEBI" id="CHEBI:456216"/>
        <note>allosteric activator; ligand shared between dimeric partners</note>
    </ligand>
</feature>
<feature type="binding site" description="in other chain" evidence="1">
    <location>
        <position position="213"/>
    </location>
    <ligand>
        <name>ADP</name>
        <dbReference type="ChEBI" id="CHEBI:456216"/>
        <note>allosteric activator; ligand shared between dimeric partners</note>
    </ligand>
</feature>
<feature type="binding site" description="in other chain" evidence="1">
    <location>
        <begin position="215"/>
        <end position="217"/>
    </location>
    <ligand>
        <name>ADP</name>
        <dbReference type="ChEBI" id="CHEBI:456216"/>
        <note>allosteric activator; ligand shared between dimeric partners</note>
    </ligand>
</feature>
<feature type="binding site" description="in other chain" evidence="1">
    <location>
        <position position="224"/>
    </location>
    <ligand>
        <name>substrate</name>
        <note>ligand shared between dimeric partners</note>
    </ligand>
</feature>
<feature type="binding site" evidence="1">
    <location>
        <position position="245"/>
    </location>
    <ligand>
        <name>substrate</name>
        <note>ligand shared between dimeric partners</note>
    </ligand>
</feature>
<feature type="binding site" description="in other chain" evidence="1">
    <location>
        <begin position="251"/>
        <end position="254"/>
    </location>
    <ligand>
        <name>substrate</name>
        <note>ligand shared between dimeric partners</note>
    </ligand>
</feature>
<organism>
    <name type="scientific">Staphylococcus aureus (strain MRSA252)</name>
    <dbReference type="NCBI Taxonomy" id="282458"/>
    <lineage>
        <taxon>Bacteria</taxon>
        <taxon>Bacillati</taxon>
        <taxon>Bacillota</taxon>
        <taxon>Bacilli</taxon>
        <taxon>Bacillales</taxon>
        <taxon>Staphylococcaceae</taxon>
        <taxon>Staphylococcus</taxon>
    </lineage>
</organism>
<protein>
    <recommendedName>
        <fullName evidence="1">ATP-dependent 6-phosphofructokinase</fullName>
        <shortName evidence="1">ATP-PFK</shortName>
        <shortName evidence="1">Phosphofructokinase</shortName>
        <ecNumber evidence="1">2.7.1.11</ecNumber>
    </recommendedName>
    <alternativeName>
        <fullName evidence="1">Phosphohexokinase</fullName>
    </alternativeName>
</protein>
<name>PFKA_STAAR</name>
<gene>
    <name evidence="1" type="primary">pfkA</name>
    <name type="synonym">pfk</name>
    <name type="ordered locus">SAR1777</name>
</gene>
<reference key="1">
    <citation type="journal article" date="2004" name="Proc. Natl. Acad. Sci. U.S.A.">
        <title>Complete genomes of two clinical Staphylococcus aureus strains: evidence for the rapid evolution of virulence and drug resistance.</title>
        <authorList>
            <person name="Holden M.T.G."/>
            <person name="Feil E.J."/>
            <person name="Lindsay J.A."/>
            <person name="Peacock S.J."/>
            <person name="Day N.P.J."/>
            <person name="Enright M.C."/>
            <person name="Foster T.J."/>
            <person name="Moore C.E."/>
            <person name="Hurst L."/>
            <person name="Atkin R."/>
            <person name="Barron A."/>
            <person name="Bason N."/>
            <person name="Bentley S.D."/>
            <person name="Chillingworth C."/>
            <person name="Chillingworth T."/>
            <person name="Churcher C."/>
            <person name="Clark L."/>
            <person name="Corton C."/>
            <person name="Cronin A."/>
            <person name="Doggett J."/>
            <person name="Dowd L."/>
            <person name="Feltwell T."/>
            <person name="Hance Z."/>
            <person name="Harris B."/>
            <person name="Hauser H."/>
            <person name="Holroyd S."/>
            <person name="Jagels K."/>
            <person name="James K.D."/>
            <person name="Lennard N."/>
            <person name="Line A."/>
            <person name="Mayes R."/>
            <person name="Moule S."/>
            <person name="Mungall K."/>
            <person name="Ormond D."/>
            <person name="Quail M.A."/>
            <person name="Rabbinowitsch E."/>
            <person name="Rutherford K.M."/>
            <person name="Sanders M."/>
            <person name="Sharp S."/>
            <person name="Simmonds M."/>
            <person name="Stevens K."/>
            <person name="Whitehead S."/>
            <person name="Barrell B.G."/>
            <person name="Spratt B.G."/>
            <person name="Parkhill J."/>
        </authorList>
    </citation>
    <scope>NUCLEOTIDE SEQUENCE [LARGE SCALE GENOMIC DNA]</scope>
    <source>
        <strain>MRSA252</strain>
    </source>
</reference>
<dbReference type="EC" id="2.7.1.11" evidence="1"/>
<dbReference type="EMBL" id="BX571856">
    <property type="protein sequence ID" value="CAG40768.1"/>
    <property type="molecule type" value="Genomic_DNA"/>
</dbReference>
<dbReference type="RefSeq" id="WP_000717560.1">
    <property type="nucleotide sequence ID" value="NC_002952.2"/>
</dbReference>
<dbReference type="SMR" id="Q6GG08"/>
<dbReference type="IntAct" id="Q6GG08">
    <property type="interactions" value="1"/>
</dbReference>
<dbReference type="KEGG" id="sar:SAR1777"/>
<dbReference type="HOGENOM" id="CLU_020655_0_1_9"/>
<dbReference type="UniPathway" id="UPA00109">
    <property type="reaction ID" value="UER00182"/>
</dbReference>
<dbReference type="Proteomes" id="UP000000596">
    <property type="component" value="Chromosome"/>
</dbReference>
<dbReference type="GO" id="GO:0005945">
    <property type="term" value="C:6-phosphofructokinase complex"/>
    <property type="evidence" value="ECO:0007669"/>
    <property type="project" value="TreeGrafter"/>
</dbReference>
<dbReference type="GO" id="GO:0003872">
    <property type="term" value="F:6-phosphofructokinase activity"/>
    <property type="evidence" value="ECO:0007669"/>
    <property type="project" value="UniProtKB-UniRule"/>
</dbReference>
<dbReference type="GO" id="GO:0016208">
    <property type="term" value="F:AMP binding"/>
    <property type="evidence" value="ECO:0007669"/>
    <property type="project" value="TreeGrafter"/>
</dbReference>
<dbReference type="GO" id="GO:0005524">
    <property type="term" value="F:ATP binding"/>
    <property type="evidence" value="ECO:0007669"/>
    <property type="project" value="UniProtKB-KW"/>
</dbReference>
<dbReference type="GO" id="GO:0070095">
    <property type="term" value="F:fructose-6-phosphate binding"/>
    <property type="evidence" value="ECO:0007669"/>
    <property type="project" value="TreeGrafter"/>
</dbReference>
<dbReference type="GO" id="GO:0042802">
    <property type="term" value="F:identical protein binding"/>
    <property type="evidence" value="ECO:0007669"/>
    <property type="project" value="TreeGrafter"/>
</dbReference>
<dbReference type="GO" id="GO:0046872">
    <property type="term" value="F:metal ion binding"/>
    <property type="evidence" value="ECO:0007669"/>
    <property type="project" value="UniProtKB-KW"/>
</dbReference>
<dbReference type="GO" id="GO:0048029">
    <property type="term" value="F:monosaccharide binding"/>
    <property type="evidence" value="ECO:0007669"/>
    <property type="project" value="TreeGrafter"/>
</dbReference>
<dbReference type="GO" id="GO:0061621">
    <property type="term" value="P:canonical glycolysis"/>
    <property type="evidence" value="ECO:0007669"/>
    <property type="project" value="TreeGrafter"/>
</dbReference>
<dbReference type="GO" id="GO:0030388">
    <property type="term" value="P:fructose 1,6-bisphosphate metabolic process"/>
    <property type="evidence" value="ECO:0007669"/>
    <property type="project" value="TreeGrafter"/>
</dbReference>
<dbReference type="GO" id="GO:0006002">
    <property type="term" value="P:fructose 6-phosphate metabolic process"/>
    <property type="evidence" value="ECO:0007669"/>
    <property type="project" value="InterPro"/>
</dbReference>
<dbReference type="FunFam" id="3.40.50.450:FF:000001">
    <property type="entry name" value="ATP-dependent 6-phosphofructokinase"/>
    <property type="match status" value="1"/>
</dbReference>
<dbReference type="FunFam" id="3.40.50.460:FF:000002">
    <property type="entry name" value="ATP-dependent 6-phosphofructokinase"/>
    <property type="match status" value="1"/>
</dbReference>
<dbReference type="Gene3D" id="3.40.50.450">
    <property type="match status" value="1"/>
</dbReference>
<dbReference type="Gene3D" id="3.40.50.460">
    <property type="entry name" value="Phosphofructokinase domain"/>
    <property type="match status" value="1"/>
</dbReference>
<dbReference type="HAMAP" id="MF_00339">
    <property type="entry name" value="Phosphofructokinase_I_B1"/>
    <property type="match status" value="1"/>
</dbReference>
<dbReference type="InterPro" id="IPR022953">
    <property type="entry name" value="ATP_PFK"/>
</dbReference>
<dbReference type="InterPro" id="IPR012003">
    <property type="entry name" value="ATP_PFK_prok-type"/>
</dbReference>
<dbReference type="InterPro" id="IPR012828">
    <property type="entry name" value="PFKA_ATP_prok"/>
</dbReference>
<dbReference type="InterPro" id="IPR015912">
    <property type="entry name" value="Phosphofructokinase_CS"/>
</dbReference>
<dbReference type="InterPro" id="IPR000023">
    <property type="entry name" value="Phosphofructokinase_dom"/>
</dbReference>
<dbReference type="InterPro" id="IPR035966">
    <property type="entry name" value="PKF_sf"/>
</dbReference>
<dbReference type="NCBIfam" id="TIGR02482">
    <property type="entry name" value="PFKA_ATP"/>
    <property type="match status" value="1"/>
</dbReference>
<dbReference type="NCBIfam" id="NF002872">
    <property type="entry name" value="PRK03202.1"/>
    <property type="match status" value="1"/>
</dbReference>
<dbReference type="PANTHER" id="PTHR13697:SF4">
    <property type="entry name" value="ATP-DEPENDENT 6-PHOSPHOFRUCTOKINASE"/>
    <property type="match status" value="1"/>
</dbReference>
<dbReference type="PANTHER" id="PTHR13697">
    <property type="entry name" value="PHOSPHOFRUCTOKINASE"/>
    <property type="match status" value="1"/>
</dbReference>
<dbReference type="Pfam" id="PF00365">
    <property type="entry name" value="PFK"/>
    <property type="match status" value="1"/>
</dbReference>
<dbReference type="PIRSF" id="PIRSF000532">
    <property type="entry name" value="ATP_PFK_prok"/>
    <property type="match status" value="1"/>
</dbReference>
<dbReference type="PRINTS" id="PR00476">
    <property type="entry name" value="PHFRCTKINASE"/>
</dbReference>
<dbReference type="SUPFAM" id="SSF53784">
    <property type="entry name" value="Phosphofructokinase"/>
    <property type="match status" value="1"/>
</dbReference>
<dbReference type="PROSITE" id="PS00433">
    <property type="entry name" value="PHOSPHOFRUCTOKINASE"/>
    <property type="match status" value="1"/>
</dbReference>
<proteinExistence type="inferred from homology"/>
<accession>Q6GG08</accession>
<evidence type="ECO:0000255" key="1">
    <source>
        <dbReference type="HAMAP-Rule" id="MF_00339"/>
    </source>
</evidence>
<sequence length="322" mass="34824">MKKIAVLTSGGDSPGMNAAVRAVVRTAIYNEIEVYGVYHGYQGLLNDDIHKLELGSVGDTIQRGGTFLYSARCPEFKEQEVRKVAIENLRKRGIEGLVVIGGDGSYRGAQRISEECKEIQTIGIPGTIDNDINGTDFTIGFDTALNTIIGLVDKIRDTASSHARTFIIEAMGRDCGDLALWAGLSVGAETIVVPEVKTDIKEIADKIEQGIKRGKKHSIVLVAEGCMTAQDCQKELSQFINVDNRVSVLGHVQRGGSPTGADRVLASRLGGYAVDLLMQGETAKGVGIKNNKIVATSFDEIFDGKDHKFDYSLYELANKLSI</sequence>
<comment type="function">
    <text evidence="1">Catalyzes the phosphorylation of D-fructose 6-phosphate to fructose 1,6-bisphosphate by ATP, the first committing step of glycolysis.</text>
</comment>
<comment type="catalytic activity">
    <reaction evidence="1">
        <text>beta-D-fructose 6-phosphate + ATP = beta-D-fructose 1,6-bisphosphate + ADP + H(+)</text>
        <dbReference type="Rhea" id="RHEA:16109"/>
        <dbReference type="ChEBI" id="CHEBI:15378"/>
        <dbReference type="ChEBI" id="CHEBI:30616"/>
        <dbReference type="ChEBI" id="CHEBI:32966"/>
        <dbReference type="ChEBI" id="CHEBI:57634"/>
        <dbReference type="ChEBI" id="CHEBI:456216"/>
        <dbReference type="EC" id="2.7.1.11"/>
    </reaction>
</comment>
<comment type="cofactor">
    <cofactor evidence="1">
        <name>Mg(2+)</name>
        <dbReference type="ChEBI" id="CHEBI:18420"/>
    </cofactor>
</comment>
<comment type="activity regulation">
    <text evidence="1">Allosterically activated by ADP and other diphosphonucleosides, and allosterically inhibited by phosphoenolpyruvate.</text>
</comment>
<comment type="pathway">
    <text evidence="1">Carbohydrate degradation; glycolysis; D-glyceraldehyde 3-phosphate and glycerone phosphate from D-glucose: step 3/4.</text>
</comment>
<comment type="subunit">
    <text evidence="1">Homotetramer.</text>
</comment>
<comment type="subcellular location">
    <subcellularLocation>
        <location evidence="1">Cytoplasm</location>
    </subcellularLocation>
</comment>
<comment type="similarity">
    <text evidence="1">Belongs to the phosphofructokinase type A (PFKA) family. ATP-dependent PFK group I subfamily. Prokaryotic clade 'B1' sub-subfamily.</text>
</comment>